<proteinExistence type="inferred from homology"/>
<reference key="1">
    <citation type="journal article" date="2005" name="J. Bacteriol.">
        <title>Complete genome sequence and analysis of the multiresistant nosocomial pathogen Corynebacterium jeikeium K411, a lipid-requiring bacterium of the human skin flora.</title>
        <authorList>
            <person name="Tauch A."/>
            <person name="Kaiser O."/>
            <person name="Hain T."/>
            <person name="Goesmann A."/>
            <person name="Weisshaar B."/>
            <person name="Albersmeier A."/>
            <person name="Bekel T."/>
            <person name="Bischoff N."/>
            <person name="Brune I."/>
            <person name="Chakraborty T."/>
            <person name="Kalinowski J."/>
            <person name="Meyer F."/>
            <person name="Rupp O."/>
            <person name="Schneiker S."/>
            <person name="Viehoever P."/>
            <person name="Puehler A."/>
        </authorList>
    </citation>
    <scope>NUCLEOTIDE SEQUENCE [LARGE SCALE GENOMIC DNA]</scope>
    <source>
        <strain>K411</strain>
    </source>
</reference>
<name>OBG_CORJK</name>
<organism>
    <name type="scientific">Corynebacterium jeikeium (strain K411)</name>
    <dbReference type="NCBI Taxonomy" id="306537"/>
    <lineage>
        <taxon>Bacteria</taxon>
        <taxon>Bacillati</taxon>
        <taxon>Actinomycetota</taxon>
        <taxon>Actinomycetes</taxon>
        <taxon>Mycobacteriales</taxon>
        <taxon>Corynebacteriaceae</taxon>
        <taxon>Corynebacterium</taxon>
    </lineage>
</organism>
<comment type="function">
    <text evidence="1">An essential GTPase which binds GTP, GDP and possibly (p)ppGpp with moderate affinity, with high nucleotide exchange rates and a fairly low GTP hydrolysis rate. Plays a role in control of the cell cycle, stress response, ribosome biogenesis and in those bacteria that undergo differentiation, in morphogenesis control.</text>
</comment>
<comment type="cofactor">
    <cofactor evidence="1">
        <name>Mg(2+)</name>
        <dbReference type="ChEBI" id="CHEBI:18420"/>
    </cofactor>
</comment>
<comment type="subunit">
    <text evidence="1">Monomer.</text>
</comment>
<comment type="subcellular location">
    <subcellularLocation>
        <location evidence="1">Cytoplasm</location>
    </subcellularLocation>
</comment>
<comment type="similarity">
    <text evidence="1">Belongs to the TRAFAC class OBG-HflX-like GTPase superfamily. OBG GTPase family.</text>
</comment>
<accession>Q4JWT6</accession>
<protein>
    <recommendedName>
        <fullName evidence="1">GTPase Obg</fullName>
        <ecNumber evidence="1">3.6.5.-</ecNumber>
    </recommendedName>
    <alternativeName>
        <fullName evidence="1">GTP-binding protein Obg</fullName>
    </alternativeName>
</protein>
<evidence type="ECO:0000255" key="1">
    <source>
        <dbReference type="HAMAP-Rule" id="MF_01454"/>
    </source>
</evidence>
<evidence type="ECO:0000255" key="2">
    <source>
        <dbReference type="PROSITE-ProRule" id="PRU01229"/>
    </source>
</evidence>
<evidence type="ECO:0000255" key="3">
    <source>
        <dbReference type="PROSITE-ProRule" id="PRU01231"/>
    </source>
</evidence>
<evidence type="ECO:0000256" key="4">
    <source>
        <dbReference type="SAM" id="MobiDB-lite"/>
    </source>
</evidence>
<dbReference type="EC" id="3.6.5.-" evidence="1"/>
<dbReference type="EMBL" id="CR931997">
    <property type="protein sequence ID" value="CAI36721.1"/>
    <property type="molecule type" value="Genomic_DNA"/>
</dbReference>
<dbReference type="RefSeq" id="WP_005296468.1">
    <property type="nucleotide sequence ID" value="NC_007164.1"/>
</dbReference>
<dbReference type="SMR" id="Q4JWT6"/>
<dbReference type="STRING" id="306537.jk0562"/>
<dbReference type="GeneID" id="92738065"/>
<dbReference type="KEGG" id="cjk:jk0562"/>
<dbReference type="eggNOG" id="COG0536">
    <property type="taxonomic scope" value="Bacteria"/>
</dbReference>
<dbReference type="HOGENOM" id="CLU_011747_0_0_11"/>
<dbReference type="OrthoDB" id="9807318at2"/>
<dbReference type="Proteomes" id="UP000000545">
    <property type="component" value="Chromosome"/>
</dbReference>
<dbReference type="GO" id="GO:0005737">
    <property type="term" value="C:cytoplasm"/>
    <property type="evidence" value="ECO:0007669"/>
    <property type="project" value="UniProtKB-SubCell"/>
</dbReference>
<dbReference type="GO" id="GO:0005525">
    <property type="term" value="F:GTP binding"/>
    <property type="evidence" value="ECO:0007669"/>
    <property type="project" value="UniProtKB-UniRule"/>
</dbReference>
<dbReference type="GO" id="GO:0003924">
    <property type="term" value="F:GTPase activity"/>
    <property type="evidence" value="ECO:0007669"/>
    <property type="project" value="UniProtKB-UniRule"/>
</dbReference>
<dbReference type="GO" id="GO:0000287">
    <property type="term" value="F:magnesium ion binding"/>
    <property type="evidence" value="ECO:0007669"/>
    <property type="project" value="InterPro"/>
</dbReference>
<dbReference type="GO" id="GO:0042254">
    <property type="term" value="P:ribosome biogenesis"/>
    <property type="evidence" value="ECO:0007669"/>
    <property type="project" value="UniProtKB-UniRule"/>
</dbReference>
<dbReference type="CDD" id="cd01898">
    <property type="entry name" value="Obg"/>
    <property type="match status" value="1"/>
</dbReference>
<dbReference type="FunFam" id="2.70.210.12:FF:000001">
    <property type="entry name" value="GTPase Obg"/>
    <property type="match status" value="1"/>
</dbReference>
<dbReference type="Gene3D" id="3.30.300.350">
    <property type="entry name" value="GTP-binding protein OBG, C-terminal domain"/>
    <property type="match status" value="1"/>
</dbReference>
<dbReference type="Gene3D" id="2.70.210.12">
    <property type="entry name" value="GTP1/OBG domain"/>
    <property type="match status" value="1"/>
</dbReference>
<dbReference type="Gene3D" id="3.40.50.300">
    <property type="entry name" value="P-loop containing nucleotide triphosphate hydrolases"/>
    <property type="match status" value="1"/>
</dbReference>
<dbReference type="HAMAP" id="MF_01454">
    <property type="entry name" value="GTPase_Obg"/>
    <property type="match status" value="1"/>
</dbReference>
<dbReference type="InterPro" id="IPR031167">
    <property type="entry name" value="G_OBG"/>
</dbReference>
<dbReference type="InterPro" id="IPR006073">
    <property type="entry name" value="GTP-bd"/>
</dbReference>
<dbReference type="InterPro" id="IPR014100">
    <property type="entry name" value="GTP-bd_Obg/CgtA"/>
</dbReference>
<dbReference type="InterPro" id="IPR036346">
    <property type="entry name" value="GTP-bd_prot_GTP1/OBG_C_sf"/>
</dbReference>
<dbReference type="InterPro" id="IPR006074">
    <property type="entry name" value="GTP1-OBG_CS"/>
</dbReference>
<dbReference type="InterPro" id="IPR006169">
    <property type="entry name" value="GTP1_OBG_dom"/>
</dbReference>
<dbReference type="InterPro" id="IPR036726">
    <property type="entry name" value="GTP1_OBG_dom_sf"/>
</dbReference>
<dbReference type="InterPro" id="IPR045086">
    <property type="entry name" value="OBG_GTPase"/>
</dbReference>
<dbReference type="InterPro" id="IPR015349">
    <property type="entry name" value="OCT_dom"/>
</dbReference>
<dbReference type="InterPro" id="IPR027417">
    <property type="entry name" value="P-loop_NTPase"/>
</dbReference>
<dbReference type="NCBIfam" id="TIGR02729">
    <property type="entry name" value="Obg_CgtA"/>
    <property type="match status" value="1"/>
</dbReference>
<dbReference type="NCBIfam" id="TIGR03595">
    <property type="entry name" value="Obg_CgtA_exten"/>
    <property type="match status" value="1"/>
</dbReference>
<dbReference type="NCBIfam" id="NF008954">
    <property type="entry name" value="PRK12296.1"/>
    <property type="match status" value="1"/>
</dbReference>
<dbReference type="NCBIfam" id="NF008955">
    <property type="entry name" value="PRK12297.1"/>
    <property type="match status" value="1"/>
</dbReference>
<dbReference type="NCBIfam" id="NF008956">
    <property type="entry name" value="PRK12299.1"/>
    <property type="match status" value="1"/>
</dbReference>
<dbReference type="PANTHER" id="PTHR11702">
    <property type="entry name" value="DEVELOPMENTALLY REGULATED GTP-BINDING PROTEIN-RELATED"/>
    <property type="match status" value="1"/>
</dbReference>
<dbReference type="PANTHER" id="PTHR11702:SF31">
    <property type="entry name" value="MITOCHONDRIAL RIBOSOME-ASSOCIATED GTPASE 2"/>
    <property type="match status" value="1"/>
</dbReference>
<dbReference type="Pfam" id="PF09269">
    <property type="entry name" value="DUF1967"/>
    <property type="match status" value="1"/>
</dbReference>
<dbReference type="Pfam" id="PF01018">
    <property type="entry name" value="GTP1_OBG"/>
    <property type="match status" value="1"/>
</dbReference>
<dbReference type="Pfam" id="PF01926">
    <property type="entry name" value="MMR_HSR1"/>
    <property type="match status" value="1"/>
</dbReference>
<dbReference type="PRINTS" id="PR00326">
    <property type="entry name" value="GTP1OBG"/>
</dbReference>
<dbReference type="SUPFAM" id="SSF102741">
    <property type="entry name" value="Obg GTP-binding protein C-terminal domain"/>
    <property type="match status" value="1"/>
</dbReference>
<dbReference type="SUPFAM" id="SSF82051">
    <property type="entry name" value="Obg GTP-binding protein N-terminal domain"/>
    <property type="match status" value="1"/>
</dbReference>
<dbReference type="SUPFAM" id="SSF52540">
    <property type="entry name" value="P-loop containing nucleoside triphosphate hydrolases"/>
    <property type="match status" value="1"/>
</dbReference>
<dbReference type="PROSITE" id="PS51710">
    <property type="entry name" value="G_OBG"/>
    <property type="match status" value="1"/>
</dbReference>
<dbReference type="PROSITE" id="PS00905">
    <property type="entry name" value="GTP1_OBG"/>
    <property type="match status" value="1"/>
</dbReference>
<dbReference type="PROSITE" id="PS51883">
    <property type="entry name" value="OBG"/>
    <property type="match status" value="1"/>
</dbReference>
<dbReference type="PROSITE" id="PS51881">
    <property type="entry name" value="OCT"/>
    <property type="match status" value="1"/>
</dbReference>
<gene>
    <name evidence="1" type="primary">obg</name>
    <name type="ordered locus">jk0562</name>
</gene>
<feature type="chain" id="PRO_0000385861" description="GTPase Obg">
    <location>
        <begin position="1"/>
        <end position="503"/>
    </location>
</feature>
<feature type="domain" description="Obg" evidence="3">
    <location>
        <begin position="2"/>
        <end position="159"/>
    </location>
</feature>
<feature type="domain" description="OBG-type G" evidence="1">
    <location>
        <begin position="160"/>
        <end position="340"/>
    </location>
</feature>
<feature type="domain" description="OCT" evidence="2">
    <location>
        <begin position="371"/>
        <end position="444"/>
    </location>
</feature>
<feature type="region of interest" description="Disordered" evidence="4">
    <location>
        <begin position="457"/>
        <end position="503"/>
    </location>
</feature>
<feature type="compositionally biased region" description="Basic and acidic residues" evidence="4">
    <location>
        <begin position="457"/>
        <end position="476"/>
    </location>
</feature>
<feature type="binding site" evidence="1">
    <location>
        <begin position="166"/>
        <end position="173"/>
    </location>
    <ligand>
        <name>GTP</name>
        <dbReference type="ChEBI" id="CHEBI:37565"/>
    </ligand>
</feature>
<feature type="binding site" evidence="1">
    <location>
        <position position="173"/>
    </location>
    <ligand>
        <name>Mg(2+)</name>
        <dbReference type="ChEBI" id="CHEBI:18420"/>
    </ligand>
</feature>
<feature type="binding site" evidence="1">
    <location>
        <begin position="191"/>
        <end position="195"/>
    </location>
    <ligand>
        <name>GTP</name>
        <dbReference type="ChEBI" id="CHEBI:37565"/>
    </ligand>
</feature>
<feature type="binding site" evidence="1">
    <location>
        <position position="193"/>
    </location>
    <ligand>
        <name>Mg(2+)</name>
        <dbReference type="ChEBI" id="CHEBI:18420"/>
    </ligand>
</feature>
<feature type="binding site" evidence="1">
    <location>
        <begin position="212"/>
        <end position="215"/>
    </location>
    <ligand>
        <name>GTP</name>
        <dbReference type="ChEBI" id="CHEBI:37565"/>
    </ligand>
</feature>
<feature type="binding site" evidence="1">
    <location>
        <begin position="292"/>
        <end position="295"/>
    </location>
    <ligand>
        <name>GTP</name>
        <dbReference type="ChEBI" id="CHEBI:37565"/>
    </ligand>
</feature>
<feature type="binding site" evidence="1">
    <location>
        <begin position="321"/>
        <end position="323"/>
    </location>
    <ligand>
        <name>GTP</name>
        <dbReference type="ChEBI" id="CHEBI:37565"/>
    </ligand>
</feature>
<keyword id="KW-0963">Cytoplasm</keyword>
<keyword id="KW-0342">GTP-binding</keyword>
<keyword id="KW-0378">Hydrolase</keyword>
<keyword id="KW-0460">Magnesium</keyword>
<keyword id="KW-0479">Metal-binding</keyword>
<keyword id="KW-0547">Nucleotide-binding</keyword>
<keyword id="KW-1185">Reference proteome</keyword>
<sequence length="503" mass="53875">MPQFVDRVVLHLQAGDGGHGCASVHREKFVPLGGPDGGNGGHGGDIILEVSSQVHTLLDFHFHPHIKAQRGNNGAGDHRHGARGEDLVLQVPEGTVVLNSKGEAIADLTGKGTRMIVAAGGHGGLGNAALASKSRKAPGFALLGEPGEAKDVILELKSMADVGLVGFPSAGKSSLISVLSAAKPKIADYPFTTLVPNLGVVNVGHEVFTVADVPGLIPGASEGKGLGLDFLRHIERTAVLAHVVDAASLEADRDPVADIKALEKELANYQEELASDSGLGDLRERPRVIILNKMDVPDAADMADLQEEELKEFGWPIFRISTVAHKGLDELKYALMDIVKAHRKANPVEEKPAQVITPKGLRKRSGGRFAEFEVEADPSAEDAFIVRGEKIERWIRQTDFENDEAVGYLADRLAKAGVEEALYKAGADAGSEVTIGEITFEWDPQTAAGVDVMRSGRGTDVRLEQNTRATPEERKRASQARRGLIDENDFGDGEVAERERWQG</sequence>